<dbReference type="EC" id="2.7.7.6" evidence="1"/>
<dbReference type="EMBL" id="CP000789">
    <property type="protein sequence ID" value="ABU69265.1"/>
    <property type="molecule type" value="Genomic_DNA"/>
</dbReference>
<dbReference type="RefSeq" id="WP_005433641.1">
    <property type="nucleotide sequence ID" value="NC_022269.1"/>
</dbReference>
<dbReference type="SMR" id="A7MXF1"/>
<dbReference type="GeneID" id="67375888"/>
<dbReference type="KEGG" id="vha:VIBHAR_00225"/>
<dbReference type="PATRIC" id="fig|338187.25.peg.2326"/>
<dbReference type="Proteomes" id="UP000008152">
    <property type="component" value="Chromosome I"/>
</dbReference>
<dbReference type="GO" id="GO:0000428">
    <property type="term" value="C:DNA-directed RNA polymerase complex"/>
    <property type="evidence" value="ECO:0007669"/>
    <property type="project" value="UniProtKB-KW"/>
</dbReference>
<dbReference type="GO" id="GO:0003677">
    <property type="term" value="F:DNA binding"/>
    <property type="evidence" value="ECO:0007669"/>
    <property type="project" value="UniProtKB-UniRule"/>
</dbReference>
<dbReference type="GO" id="GO:0003899">
    <property type="term" value="F:DNA-directed RNA polymerase activity"/>
    <property type="evidence" value="ECO:0007669"/>
    <property type="project" value="UniProtKB-UniRule"/>
</dbReference>
<dbReference type="GO" id="GO:0032549">
    <property type="term" value="F:ribonucleoside binding"/>
    <property type="evidence" value="ECO:0007669"/>
    <property type="project" value="InterPro"/>
</dbReference>
<dbReference type="GO" id="GO:0006351">
    <property type="term" value="P:DNA-templated transcription"/>
    <property type="evidence" value="ECO:0007669"/>
    <property type="project" value="UniProtKB-UniRule"/>
</dbReference>
<dbReference type="CDD" id="cd00653">
    <property type="entry name" value="RNA_pol_B_RPB2"/>
    <property type="match status" value="1"/>
</dbReference>
<dbReference type="FunFam" id="2.30.150.10:FF:000001">
    <property type="entry name" value="DNA-directed RNA polymerase subunit beta"/>
    <property type="match status" value="1"/>
</dbReference>
<dbReference type="FunFam" id="2.40.270.10:FF:000003">
    <property type="entry name" value="DNA-directed RNA polymerase subunit beta"/>
    <property type="match status" value="1"/>
</dbReference>
<dbReference type="FunFam" id="2.40.270.10:FF:000004">
    <property type="entry name" value="DNA-directed RNA polymerase subunit beta"/>
    <property type="match status" value="1"/>
</dbReference>
<dbReference type="FunFam" id="2.40.50.100:FF:000006">
    <property type="entry name" value="DNA-directed RNA polymerase subunit beta"/>
    <property type="match status" value="1"/>
</dbReference>
<dbReference type="FunFam" id="2.40.50.150:FF:000001">
    <property type="entry name" value="DNA-directed RNA polymerase subunit beta"/>
    <property type="match status" value="1"/>
</dbReference>
<dbReference type="FunFam" id="3.90.1100.10:FF:000002">
    <property type="entry name" value="DNA-directed RNA polymerase subunit beta"/>
    <property type="match status" value="1"/>
</dbReference>
<dbReference type="FunFam" id="3.90.1110.10:FF:000001">
    <property type="entry name" value="DNA-directed RNA polymerase subunit beta"/>
    <property type="match status" value="1"/>
</dbReference>
<dbReference type="FunFam" id="3.90.1110.10:FF:000004">
    <property type="entry name" value="DNA-directed RNA polymerase subunit beta"/>
    <property type="match status" value="1"/>
</dbReference>
<dbReference type="FunFam" id="3.90.1800.10:FF:000001">
    <property type="entry name" value="DNA-directed RNA polymerase subunit beta"/>
    <property type="match status" value="1"/>
</dbReference>
<dbReference type="Gene3D" id="2.40.50.100">
    <property type="match status" value="1"/>
</dbReference>
<dbReference type="Gene3D" id="2.40.50.150">
    <property type="match status" value="1"/>
</dbReference>
<dbReference type="Gene3D" id="3.90.1100.10">
    <property type="match status" value="2"/>
</dbReference>
<dbReference type="Gene3D" id="6.10.140.1670">
    <property type="match status" value="1"/>
</dbReference>
<dbReference type="Gene3D" id="2.30.150.10">
    <property type="entry name" value="DNA-directed RNA polymerase, beta subunit, external 1 domain"/>
    <property type="match status" value="1"/>
</dbReference>
<dbReference type="Gene3D" id="2.40.270.10">
    <property type="entry name" value="DNA-directed RNA polymerase, subunit 2, domain 6"/>
    <property type="match status" value="1"/>
</dbReference>
<dbReference type="Gene3D" id="3.90.1800.10">
    <property type="entry name" value="RNA polymerase alpha subunit dimerisation domain"/>
    <property type="match status" value="1"/>
</dbReference>
<dbReference type="Gene3D" id="3.90.1110.10">
    <property type="entry name" value="RNA polymerase Rpb2, domain 2"/>
    <property type="match status" value="1"/>
</dbReference>
<dbReference type="HAMAP" id="MF_01321">
    <property type="entry name" value="RNApol_bact_RpoB"/>
    <property type="match status" value="1"/>
</dbReference>
<dbReference type="InterPro" id="IPR042107">
    <property type="entry name" value="DNA-dir_RNA_pol_bsu_ext_1_sf"/>
</dbReference>
<dbReference type="InterPro" id="IPR019462">
    <property type="entry name" value="DNA-dir_RNA_pol_bsu_external_1"/>
</dbReference>
<dbReference type="InterPro" id="IPR015712">
    <property type="entry name" value="DNA-dir_RNA_pol_su2"/>
</dbReference>
<dbReference type="InterPro" id="IPR007120">
    <property type="entry name" value="DNA-dir_RNAP_su2_dom"/>
</dbReference>
<dbReference type="InterPro" id="IPR037033">
    <property type="entry name" value="DNA-dir_RNAP_su2_hyb_sf"/>
</dbReference>
<dbReference type="InterPro" id="IPR010243">
    <property type="entry name" value="RNA_pol_bsu_bac"/>
</dbReference>
<dbReference type="InterPro" id="IPR007121">
    <property type="entry name" value="RNA_pol_bsu_CS"/>
</dbReference>
<dbReference type="InterPro" id="IPR007644">
    <property type="entry name" value="RNA_pol_bsu_protrusion"/>
</dbReference>
<dbReference type="InterPro" id="IPR007642">
    <property type="entry name" value="RNA_pol_Rpb2_2"/>
</dbReference>
<dbReference type="InterPro" id="IPR037034">
    <property type="entry name" value="RNA_pol_Rpb2_2_sf"/>
</dbReference>
<dbReference type="InterPro" id="IPR007645">
    <property type="entry name" value="RNA_pol_Rpb2_3"/>
</dbReference>
<dbReference type="InterPro" id="IPR007641">
    <property type="entry name" value="RNA_pol_Rpb2_7"/>
</dbReference>
<dbReference type="InterPro" id="IPR014724">
    <property type="entry name" value="RNA_pol_RPB2_OB-fold"/>
</dbReference>
<dbReference type="NCBIfam" id="NF001616">
    <property type="entry name" value="PRK00405.1"/>
    <property type="match status" value="1"/>
</dbReference>
<dbReference type="NCBIfam" id="TIGR02013">
    <property type="entry name" value="rpoB"/>
    <property type="match status" value="1"/>
</dbReference>
<dbReference type="PANTHER" id="PTHR20856">
    <property type="entry name" value="DNA-DIRECTED RNA POLYMERASE I SUBUNIT 2"/>
    <property type="match status" value="1"/>
</dbReference>
<dbReference type="Pfam" id="PF04563">
    <property type="entry name" value="RNA_pol_Rpb2_1"/>
    <property type="match status" value="1"/>
</dbReference>
<dbReference type="Pfam" id="PF04561">
    <property type="entry name" value="RNA_pol_Rpb2_2"/>
    <property type="match status" value="2"/>
</dbReference>
<dbReference type="Pfam" id="PF04565">
    <property type="entry name" value="RNA_pol_Rpb2_3"/>
    <property type="match status" value="1"/>
</dbReference>
<dbReference type="Pfam" id="PF10385">
    <property type="entry name" value="RNA_pol_Rpb2_45"/>
    <property type="match status" value="1"/>
</dbReference>
<dbReference type="Pfam" id="PF00562">
    <property type="entry name" value="RNA_pol_Rpb2_6"/>
    <property type="match status" value="1"/>
</dbReference>
<dbReference type="Pfam" id="PF04560">
    <property type="entry name" value="RNA_pol_Rpb2_7"/>
    <property type="match status" value="1"/>
</dbReference>
<dbReference type="SUPFAM" id="SSF64484">
    <property type="entry name" value="beta and beta-prime subunits of DNA dependent RNA-polymerase"/>
    <property type="match status" value="1"/>
</dbReference>
<dbReference type="PROSITE" id="PS01166">
    <property type="entry name" value="RNA_POL_BETA"/>
    <property type="match status" value="1"/>
</dbReference>
<sequence>MVYSYTEKKRIRKDFGTRPQVLDIPYLLSIQLDSFDKFIEQDPEGQYGLEAAFRSVFPIQSYNGNSELQYVSYRLGEPVFDVKECQIRGVTYSKPLRVKLRLVIFDKDAPAGTVKDIKEQEVYMGEIPLMTDNGTFVINGTERVIVSQLHRSPGVFFDSDKGKTHSSGKVLYNARVIPYRGSWLDFEFDPKDNLYVRIDRRRKLPASIILRALGKTSEEILDIFFEKVNFEVKDQTLLMELVPDRLRGETASFDIEANGKTYVEQGRRVTARHIRQLEKDGVDHIEVPVEYIVGKVASKDYINEATGEIIVNANQEISLEALANLSQAGHKSLETLFTNDLDHGPFMSETLRIDSTVDRISALVEIYRMMRPGEPPTKEAAEALFESLFFSEERYDLSTVGRMKFNSSIGREDAQEQGTLDELDIVEVMKKLIAIRNGKGEVDDIDHLGNRRIRSVGEMAENQFRVGLVRVERAVKERLSLGDLDAIMPQDLINAKPISAAVKEFFGSSQLSQFMDQNNPLSEVTHKRRISALGPGGLTRERAGFEVRDVHVTHYGRLCPIETPEGPNIGLINSLSAFARCNEYGFLETPYRRVVDGVVTDEVDYLSAIEEGQFVIAQANAALTEEGGFADELITARQKGESGLHPREHAQYMDVATNQVVSIAASLIPFLEHDDANRALMGANMQRQAVPTLKADKPLVGTGIERNVAVDSGVTAVAKRGGVIQSVDASRIVVKVNEEELVPGEAGIDIYNLTKYTRSNQNTCINQRPCVMPGEPVSRGDVLADGPSTDLGELALGQNMRIAFMPWNGYNFEDSILVSERVVQEDRFTTIHIQELTCVARDTKLGSEEITADIPNVGESALSKLDESGIVYIGAEVKGGDILVGKVTPKGETQLTPEEKLLRAIFGEKASDVKDTSLRVPNSVSGTIIDVQVFTRDGVEKDKRALEIEQMQLKEAKKDLTEEFQILEGGLLNRVRAVLIDGGYSEAKLDTTDRKKWLELTLEDDALQTQLEQLAEQWDELKADFDKKFETKRRKITQGDDLAPGVLKIVKVYLAVKRRIQPGDKMAGRHGNKGVISKINPVEDMPYDEKGQPVDIVLNPLGVPSRMNIGQILEVHLGLAAKGIGDKINQMVKEQQELAKFREFLQKVYDLGETRQKVDIASLSDDEVRTLIKNLRGGLPIATPVFDGAPEASIKALLKLADLPESGQLKLFDGRTGDQFERPVTVGYMYMLKLNHLVDDKMHARSTGSYSLVTQQPLGGKAQFGGQRFGEMEVWALEAYGAAYTLQEMLTVKSDDVNGRTKMYKNIVDGNHSMEPGMPESFNVLLKEIRSLGINIELEDEE</sequence>
<proteinExistence type="inferred from homology"/>
<feature type="chain" id="PRO_1000051985" description="DNA-directed RNA polymerase subunit beta">
    <location>
        <begin position="1"/>
        <end position="1342"/>
    </location>
</feature>
<evidence type="ECO:0000255" key="1">
    <source>
        <dbReference type="HAMAP-Rule" id="MF_01321"/>
    </source>
</evidence>
<reference key="1">
    <citation type="submission" date="2007-08" db="EMBL/GenBank/DDBJ databases">
        <authorList>
            <consortium name="The Vibrio harveyi Genome Sequencing Project"/>
            <person name="Bassler B."/>
            <person name="Clifton S.W."/>
            <person name="Fulton L."/>
            <person name="Delehaunty K."/>
            <person name="Fronick C."/>
            <person name="Harrison M."/>
            <person name="Markivic C."/>
            <person name="Fulton R."/>
            <person name="Tin-Wollam A.-M."/>
            <person name="Shah N."/>
            <person name="Pepin K."/>
            <person name="Nash W."/>
            <person name="Thiruvilangam P."/>
            <person name="Bhonagiri V."/>
            <person name="Waters C."/>
            <person name="Tu K.C."/>
            <person name="Irgon J."/>
            <person name="Wilson R.K."/>
        </authorList>
    </citation>
    <scope>NUCLEOTIDE SEQUENCE [LARGE SCALE GENOMIC DNA]</scope>
    <source>
        <strain>ATCC BAA-1116 / BB120</strain>
    </source>
</reference>
<gene>
    <name evidence="1" type="primary">rpoB</name>
    <name type="ordered locus">VIBHAR_00225</name>
</gene>
<protein>
    <recommendedName>
        <fullName evidence="1">DNA-directed RNA polymerase subunit beta</fullName>
        <shortName evidence="1">RNAP subunit beta</shortName>
        <ecNumber evidence="1">2.7.7.6</ecNumber>
    </recommendedName>
    <alternativeName>
        <fullName evidence="1">RNA polymerase subunit beta</fullName>
    </alternativeName>
    <alternativeName>
        <fullName evidence="1">Transcriptase subunit beta</fullName>
    </alternativeName>
</protein>
<comment type="function">
    <text evidence="1">DNA-dependent RNA polymerase catalyzes the transcription of DNA into RNA using the four ribonucleoside triphosphates as substrates.</text>
</comment>
<comment type="catalytic activity">
    <reaction evidence="1">
        <text>RNA(n) + a ribonucleoside 5'-triphosphate = RNA(n+1) + diphosphate</text>
        <dbReference type="Rhea" id="RHEA:21248"/>
        <dbReference type="Rhea" id="RHEA-COMP:14527"/>
        <dbReference type="Rhea" id="RHEA-COMP:17342"/>
        <dbReference type="ChEBI" id="CHEBI:33019"/>
        <dbReference type="ChEBI" id="CHEBI:61557"/>
        <dbReference type="ChEBI" id="CHEBI:140395"/>
        <dbReference type="EC" id="2.7.7.6"/>
    </reaction>
</comment>
<comment type="subunit">
    <text evidence="1">The RNAP catalytic core consists of 2 alpha, 1 beta, 1 beta' and 1 omega subunit. When a sigma factor is associated with the core the holoenzyme is formed, which can initiate transcription.</text>
</comment>
<comment type="similarity">
    <text evidence="1">Belongs to the RNA polymerase beta chain family.</text>
</comment>
<keyword id="KW-0240">DNA-directed RNA polymerase</keyword>
<keyword id="KW-0548">Nucleotidyltransferase</keyword>
<keyword id="KW-0804">Transcription</keyword>
<keyword id="KW-0808">Transferase</keyword>
<organism>
    <name type="scientific">Vibrio campbellii (strain ATCC BAA-1116)</name>
    <dbReference type="NCBI Taxonomy" id="2902295"/>
    <lineage>
        <taxon>Bacteria</taxon>
        <taxon>Pseudomonadati</taxon>
        <taxon>Pseudomonadota</taxon>
        <taxon>Gammaproteobacteria</taxon>
        <taxon>Vibrionales</taxon>
        <taxon>Vibrionaceae</taxon>
        <taxon>Vibrio</taxon>
    </lineage>
</organism>
<accession>A7MXF1</accession>
<name>RPOB_VIBC1</name>